<organism>
    <name type="scientific">Phaeosphaeria nodorum (strain SN15 / ATCC MYA-4574 / FGSC 10173)</name>
    <name type="common">Glume blotch fungus</name>
    <name type="synonym">Parastagonospora nodorum</name>
    <dbReference type="NCBI Taxonomy" id="321614"/>
    <lineage>
        <taxon>Eukaryota</taxon>
        <taxon>Fungi</taxon>
        <taxon>Dikarya</taxon>
        <taxon>Ascomycota</taxon>
        <taxon>Pezizomycotina</taxon>
        <taxon>Dothideomycetes</taxon>
        <taxon>Pleosporomycetidae</taxon>
        <taxon>Pleosporales</taxon>
        <taxon>Pleosporineae</taxon>
        <taxon>Phaeosphaeriaceae</taxon>
        <taxon>Parastagonospora</taxon>
    </lineage>
</organism>
<evidence type="ECO:0000250" key="1"/>
<evidence type="ECO:0000256" key="2">
    <source>
        <dbReference type="SAM" id="MobiDB-lite"/>
    </source>
</evidence>
<evidence type="ECO:0000305" key="3"/>
<comment type="function">
    <text evidence="1">Catalyzes the removal of a penultimate prolyl residue from the N-termini of peptides.</text>
</comment>
<comment type="catalytic activity">
    <reaction>
        <text>Release of any N-terminal amino acid, including proline, that is linked to proline, even from a dipeptide or tripeptide.</text>
        <dbReference type="EC" id="3.4.11.9"/>
    </reaction>
</comment>
<comment type="cofactor">
    <cofactor evidence="1">
        <name>Mn(2+)</name>
        <dbReference type="ChEBI" id="CHEBI:29035"/>
    </cofactor>
    <text evidence="1">Binds 2 manganese ions per subunit.</text>
</comment>
<comment type="similarity">
    <text evidence="3">Belongs to the peptidase M24B family.</text>
</comment>
<sequence length="789" mass="88042">MEVLDATSLAERLKWEAKGYWLHFEAETPLEKYPAKQHARRVQEKLGIEEGLIYLSGQQARNNEDSDMPAPFRQLRYFYYLSGGPTLAEALVKYDVDEVYYSDEVSDYIIDWYHHSCNRGKLYTLHDPAKSPIGNHHAPIDSVSLQPAMNVARMIKDEHEIKLIRKANDISSKAHREVLSNILKFTNEAQVEGLFLDVCVSHQAKQQAYDPIAASGPNAGTLHYDANDEDFGKRQLMCLDAGCEYELYASDITRTFPLSSKWPSKEAANIYRLVERMQELCIKRLAPGVRYLDLHILAHQIAIDGLLALGILHNGTKEEIYKAGTSRAFFPHGLGHHIGLEVHDVGQAELMSVRRGKQVLEQSSHLEEGMIVTVEPGIYFSVYALQHFYLPSPVHSKYINLEVLNRYLPVGGVRIEDDILITAKSYENLTTAPKGDEMLEIIQRGRSNVNSIPARRQSGRTQITEDEPPLLRAPGISASTPQSILRPIARSSTMPAELKQDKSVDFEPFEGPSLFSNFRRSMTTDEKIQRWQQDHIPTTATRINLTPSSQYKSVCGSNTREVKHVYMISGSFPPGTARGALREQILPACKQCTILCETLDRLRQSLSMSKESPEAELDVSPVISQKQIRNRRSVSSTARHDLRGDRERPQHSPMTGLANGLSAMCLEPLNHVSESPTPSQRRAGGCTPHWRGQNRADQSGDDALRAAQETQILQSKPSVRSNPATDQLSAKAVSDVLLELQRQGPAAGSDRCTLGKQEGVEGIPAISRAKNFHVSTGGSMVGEARRAEE</sequence>
<dbReference type="EC" id="3.4.11.9"/>
<dbReference type="EMBL" id="CH445327">
    <property type="protein sequence ID" value="EAT90479.2"/>
    <property type="molecule type" value="Genomic_DNA"/>
</dbReference>
<dbReference type="RefSeq" id="XP_001792881.1">
    <property type="nucleotide sequence ID" value="XM_001792829.1"/>
</dbReference>
<dbReference type="SMR" id="Q0V147"/>
<dbReference type="STRING" id="321614.Q0V147"/>
<dbReference type="EnsemblFungi" id="SNOT_02267">
    <property type="protein sequence ID" value="SNOT_02267"/>
    <property type="gene ID" value="SNOG_02267"/>
</dbReference>
<dbReference type="GeneID" id="5969731"/>
<dbReference type="KEGG" id="pno:SNOG_02267"/>
<dbReference type="VEuPathDB" id="FungiDB:JI435_022670"/>
<dbReference type="eggNOG" id="KOG2737">
    <property type="taxonomic scope" value="Eukaryota"/>
</dbReference>
<dbReference type="HOGENOM" id="CLU_017266_1_2_1"/>
<dbReference type="InParanoid" id="Q0V147"/>
<dbReference type="Proteomes" id="UP000001055">
    <property type="component" value="Unassembled WGS sequence"/>
</dbReference>
<dbReference type="GO" id="GO:0004177">
    <property type="term" value="F:aminopeptidase activity"/>
    <property type="evidence" value="ECO:0007669"/>
    <property type="project" value="UniProtKB-KW"/>
</dbReference>
<dbReference type="GO" id="GO:0046872">
    <property type="term" value="F:metal ion binding"/>
    <property type="evidence" value="ECO:0007669"/>
    <property type="project" value="UniProtKB-KW"/>
</dbReference>
<dbReference type="GO" id="GO:0008237">
    <property type="term" value="F:metallopeptidase activity"/>
    <property type="evidence" value="ECO:0007669"/>
    <property type="project" value="UniProtKB-KW"/>
</dbReference>
<dbReference type="GO" id="GO:0008233">
    <property type="term" value="F:peptidase activity"/>
    <property type="evidence" value="ECO:0000318"/>
    <property type="project" value="GO_Central"/>
</dbReference>
<dbReference type="GO" id="GO:0006508">
    <property type="term" value="P:proteolysis"/>
    <property type="evidence" value="ECO:0000318"/>
    <property type="project" value="GO_Central"/>
</dbReference>
<dbReference type="CDD" id="cd01087">
    <property type="entry name" value="Prolidase"/>
    <property type="match status" value="1"/>
</dbReference>
<dbReference type="Gene3D" id="3.90.230.10">
    <property type="entry name" value="Creatinase/methionine aminopeptidase superfamily"/>
    <property type="match status" value="1"/>
</dbReference>
<dbReference type="Gene3D" id="3.40.350.10">
    <property type="entry name" value="Creatinase/prolidase N-terminal domain"/>
    <property type="match status" value="1"/>
</dbReference>
<dbReference type="InterPro" id="IPR029149">
    <property type="entry name" value="Creatin/AminoP/Spt16_N"/>
</dbReference>
<dbReference type="InterPro" id="IPR036005">
    <property type="entry name" value="Creatinase/aminopeptidase-like"/>
</dbReference>
<dbReference type="InterPro" id="IPR000994">
    <property type="entry name" value="Pept_M24"/>
</dbReference>
<dbReference type="InterPro" id="IPR001131">
    <property type="entry name" value="Peptidase_M24B_aminopep-P_CS"/>
</dbReference>
<dbReference type="InterPro" id="IPR052433">
    <property type="entry name" value="X-Pro_dipept-like"/>
</dbReference>
<dbReference type="PANTHER" id="PTHR43226">
    <property type="entry name" value="XAA-PRO AMINOPEPTIDASE 3"/>
    <property type="match status" value="1"/>
</dbReference>
<dbReference type="PANTHER" id="PTHR43226:SF3">
    <property type="entry name" value="XAA-PRO AMINOPEPTIDASE AN0832-RELATED"/>
    <property type="match status" value="1"/>
</dbReference>
<dbReference type="Pfam" id="PF00557">
    <property type="entry name" value="Peptidase_M24"/>
    <property type="match status" value="1"/>
</dbReference>
<dbReference type="SUPFAM" id="SSF55920">
    <property type="entry name" value="Creatinase/aminopeptidase"/>
    <property type="match status" value="1"/>
</dbReference>
<dbReference type="SUPFAM" id="SSF53092">
    <property type="entry name" value="Creatinase/prolidase N-terminal domain"/>
    <property type="match status" value="1"/>
</dbReference>
<dbReference type="PROSITE" id="PS00491">
    <property type="entry name" value="PROLINE_PEPTIDASE"/>
    <property type="match status" value="1"/>
</dbReference>
<feature type="chain" id="PRO_0000411847" description="Probable Xaa-Pro aminopeptidase SNOG_02267">
    <location>
        <begin position="1"/>
        <end position="789"/>
    </location>
</feature>
<feature type="region of interest" description="Disordered" evidence="2">
    <location>
        <begin position="607"/>
        <end position="658"/>
    </location>
</feature>
<feature type="region of interest" description="Disordered" evidence="2">
    <location>
        <begin position="670"/>
        <end position="704"/>
    </location>
</feature>
<feature type="compositionally biased region" description="Polar residues" evidence="2">
    <location>
        <begin position="622"/>
        <end position="637"/>
    </location>
</feature>
<feature type="compositionally biased region" description="Basic and acidic residues" evidence="2">
    <location>
        <begin position="638"/>
        <end position="650"/>
    </location>
</feature>
<feature type="binding site" evidence="1">
    <location>
        <position position="240"/>
    </location>
    <ligand>
        <name>Mn(2+)</name>
        <dbReference type="ChEBI" id="CHEBI:29035"/>
        <label>2</label>
    </ligand>
</feature>
<feature type="binding site" evidence="1">
    <location>
        <position position="251"/>
    </location>
    <ligand>
        <name>Mn(2+)</name>
        <dbReference type="ChEBI" id="CHEBI:29035"/>
        <label>1</label>
    </ligand>
</feature>
<feature type="binding site" evidence="1">
    <location>
        <position position="251"/>
    </location>
    <ligand>
        <name>Mn(2+)</name>
        <dbReference type="ChEBI" id="CHEBI:29035"/>
        <label>2</label>
    </ligand>
</feature>
<feature type="binding site" evidence="1">
    <location>
        <position position="375"/>
    </location>
    <ligand>
        <name>Mn(2+)</name>
        <dbReference type="ChEBI" id="CHEBI:29035"/>
        <label>1</label>
    </ligand>
</feature>
<feature type="binding site" evidence="1">
    <location>
        <position position="416"/>
    </location>
    <ligand>
        <name>Mn(2+)</name>
        <dbReference type="ChEBI" id="CHEBI:29035"/>
        <label>1</label>
    </ligand>
</feature>
<feature type="binding site" evidence="1">
    <location>
        <position position="416"/>
    </location>
    <ligand>
        <name>Mn(2+)</name>
        <dbReference type="ChEBI" id="CHEBI:29035"/>
        <label>2</label>
    </ligand>
</feature>
<accession>Q0V147</accession>
<name>AMPP2_PHANO</name>
<keyword id="KW-0031">Aminopeptidase</keyword>
<keyword id="KW-0378">Hydrolase</keyword>
<keyword id="KW-0464">Manganese</keyword>
<keyword id="KW-0479">Metal-binding</keyword>
<keyword id="KW-0482">Metalloprotease</keyword>
<keyword id="KW-0645">Protease</keyword>
<reference key="1">
    <citation type="journal article" date="2007" name="Plant Cell">
        <title>Dothideomycete-plant interactions illuminated by genome sequencing and EST analysis of the wheat pathogen Stagonospora nodorum.</title>
        <authorList>
            <person name="Hane J.K."/>
            <person name="Lowe R.G.T."/>
            <person name="Solomon P.S."/>
            <person name="Tan K.-C."/>
            <person name="Schoch C.L."/>
            <person name="Spatafora J.W."/>
            <person name="Crous P.W."/>
            <person name="Kodira C.D."/>
            <person name="Birren B.W."/>
            <person name="Galagan J.E."/>
            <person name="Torriani S.F.F."/>
            <person name="McDonald B.A."/>
            <person name="Oliver R.P."/>
        </authorList>
    </citation>
    <scope>NUCLEOTIDE SEQUENCE [LARGE SCALE GENOMIC DNA]</scope>
    <source>
        <strain>SN15 / ATCC MYA-4574 / FGSC 10173</strain>
    </source>
</reference>
<gene>
    <name type="ORF">SNOG_02267</name>
</gene>
<proteinExistence type="inferred from homology"/>
<protein>
    <recommendedName>
        <fullName>Probable Xaa-Pro aminopeptidase SNOG_02267</fullName>
        <ecNumber>3.4.11.9</ecNumber>
    </recommendedName>
    <alternativeName>
        <fullName>Aminoacylproline aminopeptidase</fullName>
    </alternativeName>
    <alternativeName>
        <fullName>Prolidase</fullName>
    </alternativeName>
</protein>